<protein>
    <recommendedName>
        <fullName evidence="1">Dihydroorotate dehydrogenase (quinone)</fullName>
        <ecNumber evidence="1">1.3.5.2</ecNumber>
    </recommendedName>
    <alternativeName>
        <fullName evidence="1">DHOdehase</fullName>
        <shortName evidence="1">DHOD</shortName>
        <shortName evidence="1">DHODase</shortName>
    </alternativeName>
    <alternativeName>
        <fullName evidence="1">Dihydroorotate oxidase</fullName>
    </alternativeName>
</protein>
<name>PYRD_POLAQ</name>
<comment type="function">
    <text evidence="1">Catalyzes the conversion of dihydroorotate to orotate with quinone as electron acceptor.</text>
</comment>
<comment type="catalytic activity">
    <reaction evidence="1">
        <text>(S)-dihydroorotate + a quinone = orotate + a quinol</text>
        <dbReference type="Rhea" id="RHEA:30187"/>
        <dbReference type="ChEBI" id="CHEBI:24646"/>
        <dbReference type="ChEBI" id="CHEBI:30839"/>
        <dbReference type="ChEBI" id="CHEBI:30864"/>
        <dbReference type="ChEBI" id="CHEBI:132124"/>
        <dbReference type="EC" id="1.3.5.2"/>
    </reaction>
</comment>
<comment type="cofactor">
    <cofactor evidence="1">
        <name>FMN</name>
        <dbReference type="ChEBI" id="CHEBI:58210"/>
    </cofactor>
    <text evidence="1">Binds 1 FMN per subunit.</text>
</comment>
<comment type="pathway">
    <text evidence="1">Pyrimidine metabolism; UMP biosynthesis via de novo pathway; orotate from (S)-dihydroorotate (quinone route): step 1/1.</text>
</comment>
<comment type="subunit">
    <text evidence="1">Monomer.</text>
</comment>
<comment type="subcellular location">
    <subcellularLocation>
        <location evidence="1">Cell membrane</location>
        <topology evidence="1">Peripheral membrane protein</topology>
    </subcellularLocation>
</comment>
<comment type="similarity">
    <text evidence="1">Belongs to the dihydroorotate dehydrogenase family. Type 2 subfamily.</text>
</comment>
<accession>A4SWU5</accession>
<proteinExistence type="inferred from homology"/>
<reference key="1">
    <citation type="journal article" date="2012" name="Stand. Genomic Sci.">
        <title>Complete genome sequence of Polynucleobacter necessarius subsp. asymbioticus type strain (QLW-P1DMWA-1(T)).</title>
        <authorList>
            <person name="Meincke L."/>
            <person name="Copeland A."/>
            <person name="Lapidus A."/>
            <person name="Lucas S."/>
            <person name="Berry K.W."/>
            <person name="Del Rio T.G."/>
            <person name="Hammon N."/>
            <person name="Dalin E."/>
            <person name="Tice H."/>
            <person name="Pitluck S."/>
            <person name="Richardson P."/>
            <person name="Bruce D."/>
            <person name="Goodwin L."/>
            <person name="Han C."/>
            <person name="Tapia R."/>
            <person name="Detter J.C."/>
            <person name="Schmutz J."/>
            <person name="Brettin T."/>
            <person name="Larimer F."/>
            <person name="Land M."/>
            <person name="Hauser L."/>
            <person name="Kyrpides N.C."/>
            <person name="Ivanova N."/>
            <person name="Goker M."/>
            <person name="Woyke T."/>
            <person name="Wu Q.L."/>
            <person name="Pockl M."/>
            <person name="Hahn M.W."/>
            <person name="Klenk H.P."/>
        </authorList>
    </citation>
    <scope>NUCLEOTIDE SEQUENCE [LARGE SCALE GENOMIC DNA]</scope>
    <source>
        <strain>DSM 18221 / CIP 109841 / QLW-P1DMWA-1</strain>
    </source>
</reference>
<sequence>MIDRYSLLRPWLFCLDPEQAHNLTLKNLDRAQRFGLLQRLVSKPIADPQNLCGIEFPNPVGLAAGLDKDGKHIDSLAALGFGFLEIGTVTPRPQAGNPKPRMFRLPQAEAIINRMGFNNDGVEACVSRVRQSIFWQRGGVLGLNIGKNAITPIEDAASDYIAAMEAVYEIATYITVNISSPNTQNLRALQGEDMLRSLLRSLDDARKRLSDRYGVRKPLFLKIAPDLDQNDIHLIADLLMEFNIDAVIATNTTISREAVTGMQYGEETGGLSGAPVRIASNIVIRALKARLGVQLPIIGVGGILSGADAREKIMAGASLVQLYSGLIYKGPDLVSECAKALRQS</sequence>
<feature type="chain" id="PRO_0000336481" description="Dihydroorotate dehydrogenase (quinone)">
    <location>
        <begin position="1"/>
        <end position="344"/>
    </location>
</feature>
<feature type="active site" description="Nucleophile" evidence="1">
    <location>
        <position position="180"/>
    </location>
</feature>
<feature type="binding site" evidence="1">
    <location>
        <begin position="64"/>
        <end position="68"/>
    </location>
    <ligand>
        <name>FMN</name>
        <dbReference type="ChEBI" id="CHEBI:58210"/>
    </ligand>
</feature>
<feature type="binding site" evidence="1">
    <location>
        <position position="68"/>
    </location>
    <ligand>
        <name>substrate</name>
    </ligand>
</feature>
<feature type="binding site" evidence="1">
    <location>
        <position position="88"/>
    </location>
    <ligand>
        <name>FMN</name>
        <dbReference type="ChEBI" id="CHEBI:58210"/>
    </ligand>
</feature>
<feature type="binding site" evidence="1">
    <location>
        <begin position="113"/>
        <end position="117"/>
    </location>
    <ligand>
        <name>substrate</name>
    </ligand>
</feature>
<feature type="binding site" evidence="1">
    <location>
        <position position="144"/>
    </location>
    <ligand>
        <name>FMN</name>
        <dbReference type="ChEBI" id="CHEBI:58210"/>
    </ligand>
</feature>
<feature type="binding site" evidence="1">
    <location>
        <position position="177"/>
    </location>
    <ligand>
        <name>FMN</name>
        <dbReference type="ChEBI" id="CHEBI:58210"/>
    </ligand>
</feature>
<feature type="binding site" evidence="1">
    <location>
        <position position="177"/>
    </location>
    <ligand>
        <name>substrate</name>
    </ligand>
</feature>
<feature type="binding site" evidence="1">
    <location>
        <position position="182"/>
    </location>
    <ligand>
        <name>substrate</name>
    </ligand>
</feature>
<feature type="binding site" evidence="1">
    <location>
        <position position="222"/>
    </location>
    <ligand>
        <name>FMN</name>
        <dbReference type="ChEBI" id="CHEBI:58210"/>
    </ligand>
</feature>
<feature type="binding site" evidence="1">
    <location>
        <position position="250"/>
    </location>
    <ligand>
        <name>FMN</name>
        <dbReference type="ChEBI" id="CHEBI:58210"/>
    </ligand>
</feature>
<feature type="binding site" evidence="1">
    <location>
        <begin position="251"/>
        <end position="252"/>
    </location>
    <ligand>
        <name>substrate</name>
    </ligand>
</feature>
<feature type="binding site" evidence="1">
    <location>
        <position position="273"/>
    </location>
    <ligand>
        <name>FMN</name>
        <dbReference type="ChEBI" id="CHEBI:58210"/>
    </ligand>
</feature>
<feature type="binding site" evidence="1">
    <location>
        <position position="302"/>
    </location>
    <ligand>
        <name>FMN</name>
        <dbReference type="ChEBI" id="CHEBI:58210"/>
    </ligand>
</feature>
<feature type="binding site" evidence="1">
    <location>
        <begin position="323"/>
        <end position="324"/>
    </location>
    <ligand>
        <name>FMN</name>
        <dbReference type="ChEBI" id="CHEBI:58210"/>
    </ligand>
</feature>
<organism>
    <name type="scientific">Polynucleobacter asymbioticus (strain DSM 18221 / CIP 109841 / QLW-P1DMWA-1)</name>
    <name type="common">Polynucleobacter necessarius subsp. asymbioticus</name>
    <dbReference type="NCBI Taxonomy" id="312153"/>
    <lineage>
        <taxon>Bacteria</taxon>
        <taxon>Pseudomonadati</taxon>
        <taxon>Pseudomonadota</taxon>
        <taxon>Betaproteobacteria</taxon>
        <taxon>Burkholderiales</taxon>
        <taxon>Burkholderiaceae</taxon>
        <taxon>Polynucleobacter</taxon>
    </lineage>
</organism>
<evidence type="ECO:0000255" key="1">
    <source>
        <dbReference type="HAMAP-Rule" id="MF_00225"/>
    </source>
</evidence>
<gene>
    <name evidence="1" type="primary">pyrD</name>
    <name type="ordered locus">Pnuc_0741</name>
</gene>
<dbReference type="EC" id="1.3.5.2" evidence="1"/>
<dbReference type="EMBL" id="CP000655">
    <property type="protein sequence ID" value="ABP33959.1"/>
    <property type="molecule type" value="Genomic_DNA"/>
</dbReference>
<dbReference type="RefSeq" id="WP_011902584.1">
    <property type="nucleotide sequence ID" value="NC_009379.1"/>
</dbReference>
<dbReference type="SMR" id="A4SWU5"/>
<dbReference type="GeneID" id="31481102"/>
<dbReference type="KEGG" id="pnu:Pnuc_0741"/>
<dbReference type="eggNOG" id="COG0167">
    <property type="taxonomic scope" value="Bacteria"/>
</dbReference>
<dbReference type="HOGENOM" id="CLU_013640_2_0_4"/>
<dbReference type="UniPathway" id="UPA00070">
    <property type="reaction ID" value="UER00946"/>
</dbReference>
<dbReference type="Proteomes" id="UP000000231">
    <property type="component" value="Chromosome"/>
</dbReference>
<dbReference type="GO" id="GO:0005737">
    <property type="term" value="C:cytoplasm"/>
    <property type="evidence" value="ECO:0007669"/>
    <property type="project" value="InterPro"/>
</dbReference>
<dbReference type="GO" id="GO:0005886">
    <property type="term" value="C:plasma membrane"/>
    <property type="evidence" value="ECO:0007669"/>
    <property type="project" value="UniProtKB-SubCell"/>
</dbReference>
<dbReference type="GO" id="GO:0106430">
    <property type="term" value="F:dihydroorotate dehydrogenase (quinone) activity"/>
    <property type="evidence" value="ECO:0007669"/>
    <property type="project" value="UniProtKB-EC"/>
</dbReference>
<dbReference type="GO" id="GO:0006207">
    <property type="term" value="P:'de novo' pyrimidine nucleobase biosynthetic process"/>
    <property type="evidence" value="ECO:0007669"/>
    <property type="project" value="InterPro"/>
</dbReference>
<dbReference type="GO" id="GO:0044205">
    <property type="term" value="P:'de novo' UMP biosynthetic process"/>
    <property type="evidence" value="ECO:0007669"/>
    <property type="project" value="UniProtKB-UniRule"/>
</dbReference>
<dbReference type="CDD" id="cd04738">
    <property type="entry name" value="DHOD_2_like"/>
    <property type="match status" value="1"/>
</dbReference>
<dbReference type="Gene3D" id="3.20.20.70">
    <property type="entry name" value="Aldolase class I"/>
    <property type="match status" value="1"/>
</dbReference>
<dbReference type="HAMAP" id="MF_00225">
    <property type="entry name" value="DHO_dh_type2"/>
    <property type="match status" value="1"/>
</dbReference>
<dbReference type="InterPro" id="IPR013785">
    <property type="entry name" value="Aldolase_TIM"/>
</dbReference>
<dbReference type="InterPro" id="IPR050074">
    <property type="entry name" value="DHO_dehydrogenase"/>
</dbReference>
<dbReference type="InterPro" id="IPR012135">
    <property type="entry name" value="Dihydroorotate_DH_1_2"/>
</dbReference>
<dbReference type="InterPro" id="IPR005719">
    <property type="entry name" value="Dihydroorotate_DH_2"/>
</dbReference>
<dbReference type="InterPro" id="IPR005720">
    <property type="entry name" value="Dihydroorotate_DH_cat"/>
</dbReference>
<dbReference type="InterPro" id="IPR001295">
    <property type="entry name" value="Dihydroorotate_DH_CS"/>
</dbReference>
<dbReference type="NCBIfam" id="NF003644">
    <property type="entry name" value="PRK05286.1-1"/>
    <property type="match status" value="1"/>
</dbReference>
<dbReference type="NCBIfam" id="NF003645">
    <property type="entry name" value="PRK05286.1-2"/>
    <property type="match status" value="1"/>
</dbReference>
<dbReference type="NCBIfam" id="NF003646">
    <property type="entry name" value="PRK05286.1-4"/>
    <property type="match status" value="1"/>
</dbReference>
<dbReference type="NCBIfam" id="NF003652">
    <property type="entry name" value="PRK05286.2-5"/>
    <property type="match status" value="1"/>
</dbReference>
<dbReference type="NCBIfam" id="TIGR01036">
    <property type="entry name" value="pyrD_sub2"/>
    <property type="match status" value="1"/>
</dbReference>
<dbReference type="PANTHER" id="PTHR48109:SF4">
    <property type="entry name" value="DIHYDROOROTATE DEHYDROGENASE (QUINONE), MITOCHONDRIAL"/>
    <property type="match status" value="1"/>
</dbReference>
<dbReference type="PANTHER" id="PTHR48109">
    <property type="entry name" value="DIHYDROOROTATE DEHYDROGENASE (QUINONE), MITOCHONDRIAL-RELATED"/>
    <property type="match status" value="1"/>
</dbReference>
<dbReference type="Pfam" id="PF01180">
    <property type="entry name" value="DHO_dh"/>
    <property type="match status" value="1"/>
</dbReference>
<dbReference type="PIRSF" id="PIRSF000164">
    <property type="entry name" value="DHO_oxidase"/>
    <property type="match status" value="1"/>
</dbReference>
<dbReference type="SUPFAM" id="SSF51395">
    <property type="entry name" value="FMN-linked oxidoreductases"/>
    <property type="match status" value="1"/>
</dbReference>
<dbReference type="PROSITE" id="PS00911">
    <property type="entry name" value="DHODEHASE_1"/>
    <property type="match status" value="1"/>
</dbReference>
<dbReference type="PROSITE" id="PS00912">
    <property type="entry name" value="DHODEHASE_2"/>
    <property type="match status" value="1"/>
</dbReference>
<keyword id="KW-1003">Cell membrane</keyword>
<keyword id="KW-0285">Flavoprotein</keyword>
<keyword id="KW-0288">FMN</keyword>
<keyword id="KW-0472">Membrane</keyword>
<keyword id="KW-0560">Oxidoreductase</keyword>
<keyword id="KW-0665">Pyrimidine biosynthesis</keyword>
<keyword id="KW-1185">Reference proteome</keyword>